<proteinExistence type="evidence at protein level"/>
<sequence length="424" mass="46239">MVAIDLPYDKRTITAQIDDENYAGKLVSQAATYHNKLSEQETVEKSLDNPIGSDKLEELARGKHNIVIISSDHTRPVPSHIITPILLRRLRSVAPDARIRILVATGFHRPSTHEELVNKYGEDIVNNEEIVMHVSTDDSSMVKIGQLPSGGDCIINKVAAEADLLISEGFIESHFFAGFSGGRKSVLPGIASYKTIMANHSGEFINSPKARTGNLMHNSIHKDMVYAARTAKLAFIINVVLDEDKKIIGSFAGDMEAAHKVGCDFVKELSSVPAIDCDIAISTNGGYPLDQNIYQAVKGMTAAEATNKEGGTIIMVAGARDGHGGEGFYHNLADVDDPKEFLDQAINTPRLKTIPDQWTAQIFARILVHHHVIFVSDLVDPDLITNMHMELAKTLDEAMEKAYAREGQAAKVTVIPDGLGVIVK</sequence>
<name>LARA_LACPL</name>
<dbReference type="EC" id="5.1.2.1" evidence="3 5"/>
<dbReference type="EMBL" id="AL935263">
    <property type="protein sequence ID" value="CCC77660.1"/>
    <property type="molecule type" value="Genomic_DNA"/>
</dbReference>
<dbReference type="RefSeq" id="WP_011100883.1">
    <property type="nucleotide sequence ID" value="NC_004567.2"/>
</dbReference>
<dbReference type="RefSeq" id="YP_004888174.1">
    <property type="nucleotide sequence ID" value="NC_004567.2"/>
</dbReference>
<dbReference type="PDB" id="5HUQ">
    <property type="method" value="X-ray"/>
    <property type="resolution" value="3.00 A"/>
    <property type="chains" value="A/B=2-424"/>
</dbReference>
<dbReference type="PDB" id="6C1W">
    <property type="method" value="X-ray"/>
    <property type="resolution" value="2.40 A"/>
    <property type="chains" value="A/B/C=1-424"/>
</dbReference>
<dbReference type="PDB" id="8EZF">
    <property type="method" value="X-ray"/>
    <property type="resolution" value="2.15 A"/>
    <property type="chains" value="B=2-424"/>
</dbReference>
<dbReference type="PDB" id="8EZH">
    <property type="method" value="X-ray"/>
    <property type="resolution" value="1.99 A"/>
    <property type="chains" value="B=2-424"/>
</dbReference>
<dbReference type="PDB" id="8EZI">
    <property type="method" value="X-ray"/>
    <property type="resolution" value="1.99 A"/>
    <property type="chains" value="B=2-424"/>
</dbReference>
<dbReference type="PDBsum" id="5HUQ"/>
<dbReference type="PDBsum" id="6C1W"/>
<dbReference type="PDBsum" id="8EZF"/>
<dbReference type="PDBsum" id="8EZH"/>
<dbReference type="PDBsum" id="8EZI"/>
<dbReference type="SMR" id="F9USS9"/>
<dbReference type="STRING" id="220668.lp_0104"/>
<dbReference type="DNASU" id="1061369"/>
<dbReference type="EnsemblBacteria" id="CCC77660">
    <property type="protein sequence ID" value="CCC77660"/>
    <property type="gene ID" value="lp_0104"/>
</dbReference>
<dbReference type="KEGG" id="lpl:lp_0104"/>
<dbReference type="PATRIC" id="fig|220668.9.peg.84"/>
<dbReference type="eggNOG" id="COG3875">
    <property type="taxonomic scope" value="Bacteria"/>
</dbReference>
<dbReference type="HOGENOM" id="CLU_050189_0_0_9"/>
<dbReference type="OrthoDB" id="9770545at2"/>
<dbReference type="PhylomeDB" id="F9USS9"/>
<dbReference type="BioCyc" id="MetaCyc:MONOMER-19498"/>
<dbReference type="BRENDA" id="5.1.2.1">
    <property type="organism ID" value="2849"/>
</dbReference>
<dbReference type="EvolutionaryTrace" id="F9USS9"/>
<dbReference type="Proteomes" id="UP000000432">
    <property type="component" value="Chromosome"/>
</dbReference>
<dbReference type="GO" id="GO:0050043">
    <property type="term" value="F:lactate racemase activity"/>
    <property type="evidence" value="ECO:0007669"/>
    <property type="project" value="UniProtKB-EC"/>
</dbReference>
<dbReference type="GO" id="GO:0046872">
    <property type="term" value="F:metal ion binding"/>
    <property type="evidence" value="ECO:0007669"/>
    <property type="project" value="UniProtKB-KW"/>
</dbReference>
<dbReference type="Gene3D" id="3.40.50.11440">
    <property type="match status" value="1"/>
</dbReference>
<dbReference type="Gene3D" id="3.90.226.30">
    <property type="match status" value="1"/>
</dbReference>
<dbReference type="InterPro" id="IPR048068">
    <property type="entry name" value="LarA-like"/>
</dbReference>
<dbReference type="InterPro" id="IPR043166">
    <property type="entry name" value="LarA-like_C"/>
</dbReference>
<dbReference type="InterPro" id="IPR018657">
    <property type="entry name" value="LarA-like_N"/>
</dbReference>
<dbReference type="InterPro" id="IPR048520">
    <property type="entry name" value="LarA_C"/>
</dbReference>
<dbReference type="InterPro" id="IPR047926">
    <property type="entry name" value="Ni_dep_LarA"/>
</dbReference>
<dbReference type="NCBIfam" id="NF033504">
    <property type="entry name" value="Ni_dep_LarA"/>
    <property type="match status" value="1"/>
</dbReference>
<dbReference type="PANTHER" id="PTHR33171">
    <property type="entry name" value="LAR_N DOMAIN-CONTAINING PROTEIN"/>
    <property type="match status" value="1"/>
</dbReference>
<dbReference type="PANTHER" id="PTHR33171:SF17">
    <property type="entry name" value="LARA-LIKE N-TERMINAL DOMAIN-CONTAINING PROTEIN"/>
    <property type="match status" value="1"/>
</dbReference>
<dbReference type="Pfam" id="PF09861">
    <property type="entry name" value="Lar_N"/>
    <property type="match status" value="1"/>
</dbReference>
<dbReference type="Pfam" id="PF21113">
    <property type="entry name" value="LarA_C"/>
    <property type="match status" value="1"/>
</dbReference>
<evidence type="ECO:0000250" key="1">
    <source>
        <dbReference type="UniProtKB" id="D9TQ02"/>
    </source>
</evidence>
<evidence type="ECO:0000269" key="2">
    <source>
    </source>
</evidence>
<evidence type="ECO:0000269" key="3">
    <source>
    </source>
</evidence>
<evidence type="ECO:0000269" key="4">
    <source>
    </source>
</evidence>
<evidence type="ECO:0000269" key="5">
    <source>
    </source>
</evidence>
<evidence type="ECO:0000269" key="6">
    <source>
    </source>
</evidence>
<evidence type="ECO:0000303" key="7">
    <source>
    </source>
</evidence>
<evidence type="ECO:0000303" key="8">
    <source>
    </source>
</evidence>
<evidence type="ECO:0000305" key="9"/>
<evidence type="ECO:0000305" key="10">
    <source>
    </source>
</evidence>
<evidence type="ECO:0000312" key="11">
    <source>
        <dbReference type="EMBL" id="CCC77660.1"/>
    </source>
</evidence>
<evidence type="ECO:0007829" key="12">
    <source>
        <dbReference type="PDB" id="5HUQ"/>
    </source>
</evidence>
<evidence type="ECO:0007829" key="13">
    <source>
        <dbReference type="PDB" id="6C1W"/>
    </source>
</evidence>
<evidence type="ECO:0007829" key="14">
    <source>
        <dbReference type="PDB" id="8EZF"/>
    </source>
</evidence>
<evidence type="ECO:0007829" key="15">
    <source>
        <dbReference type="PDB" id="8EZH"/>
    </source>
</evidence>
<reference key="1">
    <citation type="journal article" date="2003" name="Proc. Natl. Acad. Sci. U.S.A.">
        <title>Complete genome sequence of Lactobacillus plantarum WCFS1.</title>
        <authorList>
            <person name="Kleerebezem M."/>
            <person name="Boekhorst J."/>
            <person name="van Kranenburg R."/>
            <person name="Molenaar D."/>
            <person name="Kuipers O.P."/>
            <person name="Leer R."/>
            <person name="Tarchini R."/>
            <person name="Peters S.A."/>
            <person name="Sandbrink H.M."/>
            <person name="Fiers M.W.E.J."/>
            <person name="Stiekema W."/>
            <person name="Klein Lankhorst R.M."/>
            <person name="Bron P.A."/>
            <person name="Hoffer S.M."/>
            <person name="Nierop Groot M.N."/>
            <person name="Kerkhoven R."/>
            <person name="De Vries M."/>
            <person name="Ursing B."/>
            <person name="De Vos W.M."/>
            <person name="Siezen R.J."/>
        </authorList>
    </citation>
    <scope>NUCLEOTIDE SEQUENCE [LARGE SCALE GENOMIC DNA]</scope>
    <source>
        <strain>ATCC BAA-793 / NCIMB 8826 / WCFS1</strain>
    </source>
</reference>
<reference key="2">
    <citation type="journal article" date="2012" name="J. Bacteriol.">
        <title>Complete resequencing and reannotation of the Lactobacillus plantarum WCFS1 genome.</title>
        <authorList>
            <person name="Siezen R.J."/>
            <person name="Francke C."/>
            <person name="Renckens B."/>
            <person name="Boekhorst J."/>
            <person name="Wels M."/>
            <person name="Kleerebezem M."/>
            <person name="van Hijum S.A."/>
        </authorList>
    </citation>
    <scope>NUCLEOTIDE SEQUENCE [LARGE SCALE GENOMIC DNA]</scope>
    <scope>GENOME REANNOTATION</scope>
    <source>
        <strain>ATCC BAA-793 / NCIMB 8826 / WCFS1</strain>
    </source>
</reference>
<reference key="3">
    <citation type="journal article" date="2005" name="J. Bacteriol.">
        <title>Lactate racemization as a rescue pathway for supplying D-lactate to the cell wall biosynthesis machinery in Lactobacillus plantarum.</title>
        <authorList>
            <person name="Goffin P."/>
            <person name="Deghorain M."/>
            <person name="Mainardi J.L."/>
            <person name="Tytgat I."/>
            <person name="Champomier-Verges M.C."/>
            <person name="Kleerebezem M."/>
            <person name="Hols P."/>
        </authorList>
    </citation>
    <scope>FUNCTION</scope>
    <scope>INDUCTION</scope>
    <source>
        <strain>ATCC BAA-793 / NCIMB 8826 / WCFS1</strain>
    </source>
</reference>
<reference key="4">
    <citation type="journal article" date="2014" name="Nat. Commun.">
        <title>Lactate racemase is a nickel-dependent enzyme activated by a widespread maturation system.</title>
        <authorList>
            <person name="Desguin B."/>
            <person name="Goffin P."/>
            <person name="Viaene E."/>
            <person name="Kleerebezem M."/>
            <person name="Martin-Diaconescu V."/>
            <person name="Maroney M.J."/>
            <person name="Declercq J.P."/>
            <person name="Soumillion P."/>
            <person name="Hols P."/>
        </authorList>
    </citation>
    <scope>FUNCTION</scope>
    <scope>CATALYTIC ACTIVITY</scope>
    <scope>COFACTOR</scope>
    <scope>BIOPHYSICOCHEMICAL PROPERTIES</scope>
    <scope>ACTIVITY REGULATION</scope>
    <scope>INDUCTION</scope>
    <scope>DISRUPTION PHENOTYPE</scope>
    <source>
        <strain>ATCC BAA-793 / NCIMB 8826 / WCFS1</strain>
    </source>
</reference>
<reference key="5">
    <citation type="journal article" date="2015" name="J. Bacteriol.">
        <title>Enantioselective regulation of lactate racemization by LarR in Lactobacillus plantarum.</title>
        <authorList>
            <person name="Desguin B."/>
            <person name="Goffin P."/>
            <person name="Bakouche N."/>
            <person name="Diman A."/>
            <person name="Viaene E."/>
            <person name="Dandoy D."/>
            <person name="Fontaine L."/>
            <person name="Hallet B."/>
            <person name="Hols P."/>
        </authorList>
    </citation>
    <scope>INDUCTION</scope>
    <source>
        <strain>ATCC BAA-793 / NCIMB 8826 / WCFS1</strain>
    </source>
</reference>
<reference key="6">
    <citation type="journal article" date="2016" name="Proc. Natl. Acad. Sci. U.S.A.">
        <title>Nickel-pincer cofactor biosynthesis involves LarB-catalyzed pyridinium carboxylation and LarE-dependent sacrificial sulfur insertion.</title>
        <authorList>
            <person name="Desguin B."/>
            <person name="Soumillion P."/>
            <person name="Hols P."/>
            <person name="Hausinger R.P."/>
        </authorList>
    </citation>
    <scope>ACTIVITY REGULATION</scope>
    <scope>COFACTOR</scope>
</reference>
<reference key="7">
    <citation type="journal article" date="2015" name="Science">
        <title>METALLOPROTEINS. A tethered niacin-derived pincer complex with a nickel-carbon bond in lactate racemase.</title>
        <authorList>
            <person name="Desguin B."/>
            <person name="Zhang T."/>
            <person name="Soumillion P."/>
            <person name="Hols P."/>
            <person name="Hu J."/>
            <person name="Hausinger R.P."/>
        </authorList>
    </citation>
    <scope>X-RAY CRYSTALLOGRAPHY (3.00 ANGSTROMS) OF 2-424 IN COMPLEX WITH (SCS)NI COFACTOR</scope>
    <scope>FUNCTION</scope>
    <scope>CATALYTIC ACTIVITY</scope>
    <scope>COFACTOR</scope>
    <scope>ACTIVITY REGULATION</scope>
    <scope>MUTAGENESIS OF ASP-72; ARG-75; HIS-108; HIS-174; LYS-184; HIS-200; GLN-295 AND LYS-298</scope>
    <scope>REACTION MECHANISM</scope>
    <scope>ACTIVE SITE</scope>
</reference>
<feature type="chain" id="PRO_0000441651" description="Lactate racemase">
    <location>
        <begin position="1"/>
        <end position="424"/>
    </location>
</feature>
<feature type="active site" description="Proton donor/acceptor" evidence="10">
    <location>
        <position position="108"/>
    </location>
</feature>
<feature type="active site" description="Proton donor/acceptor" evidence="10">
    <location>
        <position position="174"/>
    </location>
</feature>
<feature type="binding site" evidence="5">
    <location>
        <begin position="72"/>
        <end position="75"/>
    </location>
    <ligand>
        <name>Ni(II)-pyridinium-3,5-bisthiocarboxylate mononucleotide</name>
        <dbReference type="ChEBI" id="CHEBI:137373"/>
    </ligand>
</feature>
<feature type="binding site" description="covalent" evidence="5 6">
    <location>
        <position position="184"/>
    </location>
    <ligand>
        <name>Ni(II)-pyridinium-3,5-bisthiocarboxylate mononucleotide</name>
        <dbReference type="ChEBI" id="CHEBI:137373"/>
    </ligand>
</feature>
<feature type="binding site" evidence="5">
    <location>
        <position position="200"/>
    </location>
    <ligand>
        <name>Ni(II)-pyridinium-3,5-bisthiocarboxylate mononucleotide</name>
        <dbReference type="ChEBI" id="CHEBI:137373"/>
    </ligand>
    <ligandPart>
        <name>Ni</name>
        <dbReference type="ChEBI" id="CHEBI:28112"/>
    </ligandPart>
</feature>
<feature type="binding site" evidence="10">
    <location>
        <position position="295"/>
    </location>
    <ligand>
        <name>substrate</name>
    </ligand>
</feature>
<feature type="binding site" evidence="10">
    <location>
        <position position="298"/>
    </location>
    <ligand>
        <name>substrate</name>
    </ligand>
</feature>
<feature type="mutagenesis site" description="Shows residual catalytic activity in vivo." evidence="5">
    <original>D</original>
    <variation>A</variation>
    <location>
        <position position="72"/>
    </location>
</feature>
<feature type="mutagenesis site" description="Retains some catalytic activity in vitro. Exhibits reduced Ni content." evidence="5">
    <original>R</original>
    <variation>A</variation>
    <location>
        <position position="75"/>
    </location>
</feature>
<feature type="mutagenesis site" description="Loss of catalytic activity." evidence="5">
    <original>H</original>
    <variation>A</variation>
    <location>
        <position position="108"/>
    </location>
</feature>
<feature type="mutagenesis site" description="Loss of catalytic activity. Exhibits reduced Ni content." evidence="5">
    <original>H</original>
    <variation>A</variation>
    <location>
        <position position="174"/>
    </location>
</feature>
<feature type="mutagenesis site" description="Shows residual catalytic activity in vivo. Loss of Ni binding." evidence="5">
    <original>K</original>
    <variation>A</variation>
    <location>
        <position position="184"/>
    </location>
</feature>
<feature type="mutagenesis site" description="Loss of catalytic activity." evidence="5">
    <original>H</original>
    <variation>A</variation>
    <location>
        <position position="200"/>
    </location>
</feature>
<feature type="mutagenesis site" description="Retains some catalytic activity in vitro. Exhibits reduced Ni content." evidence="5">
    <original>Q</original>
    <variation>A</variation>
    <location>
        <position position="295"/>
    </location>
</feature>
<feature type="mutagenesis site" description="Loss of catalytic activity." evidence="5">
    <original>K</original>
    <variation>A</variation>
    <location>
        <position position="298"/>
    </location>
</feature>
<feature type="strand" evidence="15">
    <location>
        <begin position="2"/>
        <end position="8"/>
    </location>
</feature>
<feature type="strand" evidence="15">
    <location>
        <begin position="11"/>
        <end position="17"/>
    </location>
</feature>
<feature type="turn" evidence="15">
    <location>
        <begin position="19"/>
        <end position="21"/>
    </location>
</feature>
<feature type="strand" evidence="15">
    <location>
        <begin position="22"/>
        <end position="25"/>
    </location>
</feature>
<feature type="helix" evidence="15">
    <location>
        <begin position="29"/>
        <end position="32"/>
    </location>
</feature>
<feature type="helix" evidence="15">
    <location>
        <begin position="39"/>
        <end position="48"/>
    </location>
</feature>
<feature type="strand" evidence="15">
    <location>
        <begin position="51"/>
        <end position="53"/>
    </location>
</feature>
<feature type="helix" evidence="15">
    <location>
        <begin position="56"/>
        <end position="60"/>
    </location>
</feature>
<feature type="strand" evidence="15">
    <location>
        <begin position="64"/>
        <end position="71"/>
    </location>
</feature>
<feature type="helix" evidence="15">
    <location>
        <begin position="79"/>
        <end position="93"/>
    </location>
</feature>
<feature type="strand" evidence="15">
    <location>
        <begin position="97"/>
        <end position="104"/>
    </location>
</feature>
<feature type="helix" evidence="15">
    <location>
        <begin position="113"/>
        <end position="120"/>
    </location>
</feature>
<feature type="helix" evidence="15">
    <location>
        <begin position="122"/>
        <end position="127"/>
    </location>
</feature>
<feature type="strand" evidence="15">
    <location>
        <begin position="128"/>
        <end position="132"/>
    </location>
</feature>
<feature type="helix" evidence="15">
    <location>
        <begin position="138"/>
        <end position="140"/>
    </location>
</feature>
<feature type="strand" evidence="15">
    <location>
        <begin position="141"/>
        <end position="146"/>
    </location>
</feature>
<feature type="strand" evidence="15">
    <location>
        <begin position="150"/>
        <end position="156"/>
    </location>
</feature>
<feature type="helix" evidence="15">
    <location>
        <begin position="157"/>
        <end position="160"/>
    </location>
</feature>
<feature type="strand" evidence="15">
    <location>
        <begin position="163"/>
        <end position="170"/>
    </location>
</feature>
<feature type="turn" evidence="15">
    <location>
        <begin position="175"/>
        <end position="177"/>
    </location>
</feature>
<feature type="strand" evidence="12">
    <location>
        <begin position="178"/>
        <end position="181"/>
    </location>
</feature>
<feature type="helix" evidence="15">
    <location>
        <begin position="182"/>
        <end position="185"/>
    </location>
</feature>
<feature type="turn" evidence="15">
    <location>
        <begin position="186"/>
        <end position="190"/>
    </location>
</feature>
<feature type="helix" evidence="15">
    <location>
        <begin position="193"/>
        <end position="199"/>
    </location>
</feature>
<feature type="helix" evidence="14">
    <location>
        <begin position="202"/>
        <end position="205"/>
    </location>
</feature>
<feature type="helix" evidence="15">
    <location>
        <begin position="219"/>
        <end position="230"/>
    </location>
</feature>
<feature type="strand" evidence="15">
    <location>
        <begin position="233"/>
        <end position="241"/>
    </location>
</feature>
<feature type="strand" evidence="15">
    <location>
        <begin position="247"/>
        <end position="254"/>
    </location>
</feature>
<feature type="helix" evidence="15">
    <location>
        <begin position="257"/>
        <end position="270"/>
    </location>
</feature>
<feature type="strand" evidence="15">
    <location>
        <begin position="271"/>
        <end position="273"/>
    </location>
</feature>
<feature type="strand" evidence="15">
    <location>
        <begin position="277"/>
        <end position="283"/>
    </location>
</feature>
<feature type="turn" evidence="15">
    <location>
        <begin position="287"/>
        <end position="290"/>
    </location>
</feature>
<feature type="helix" evidence="15">
    <location>
        <begin position="293"/>
        <end position="306"/>
    </location>
</feature>
<feature type="strand" evidence="15">
    <location>
        <begin position="307"/>
        <end position="316"/>
    </location>
</feature>
<feature type="turn" evidence="15">
    <location>
        <begin position="320"/>
        <end position="323"/>
    </location>
</feature>
<feature type="helix" evidence="15">
    <location>
        <begin position="326"/>
        <end position="333"/>
    </location>
</feature>
<feature type="strand" evidence="14">
    <location>
        <begin position="335"/>
        <end position="337"/>
    </location>
</feature>
<feature type="helix" evidence="15">
    <location>
        <begin position="338"/>
        <end position="342"/>
    </location>
</feature>
<feature type="helix" evidence="13">
    <location>
        <begin position="350"/>
        <end position="352"/>
    </location>
</feature>
<feature type="helix" evidence="15">
    <location>
        <begin position="357"/>
        <end position="369"/>
    </location>
</feature>
<feature type="strand" evidence="15">
    <location>
        <begin position="370"/>
        <end position="375"/>
    </location>
</feature>
<feature type="strand" evidence="15">
    <location>
        <begin position="377"/>
        <end position="379"/>
    </location>
</feature>
<feature type="helix" evidence="15">
    <location>
        <begin position="381"/>
        <end position="386"/>
    </location>
</feature>
<feature type="strand" evidence="15">
    <location>
        <begin position="390"/>
        <end position="394"/>
    </location>
</feature>
<feature type="helix" evidence="15">
    <location>
        <begin position="395"/>
        <end position="406"/>
    </location>
</feature>
<feature type="strand" evidence="15">
    <location>
        <begin position="412"/>
        <end position="414"/>
    </location>
</feature>
<feature type="turn" evidence="14">
    <location>
        <begin position="418"/>
        <end position="420"/>
    </location>
</feature>
<feature type="strand" evidence="15">
    <location>
        <begin position="422"/>
        <end position="424"/>
    </location>
</feature>
<protein>
    <recommendedName>
        <fullName evidence="8">Lactate racemase</fullName>
        <shortName evidence="8">Lar</shortName>
        <ecNumber evidence="3 5">5.1.2.1</ecNumber>
    </recommendedName>
    <alternativeName>
        <fullName evidence="7 11">Lactate racemization operon protein LarA</fullName>
    </alternativeName>
</protein>
<comment type="function">
    <text evidence="2 3 5">Catalyzes the interconversion between the D- and L-isomers of lactate (PubMed:24710389, PubMed:26138974). May act as a rescue enzyme to ensure D-lactate production in physiological conditions where its production by the D-lactate dehydrogenase LdhD is not sufficient (PubMed:16166538). D-Lactate is absolutely required for growth of L.plantarum and is an essential component of the cell wall peptidoglycan in this species, where it is incorporated as the last residue of the muramoyl-pentadepsipeptide peptidoglycan precursor; its incorporation confers high level of vancomycin resistance (PubMed:16166538).</text>
</comment>
<comment type="catalytic activity">
    <reaction evidence="3 5">
        <text>(S)-lactate = (R)-lactate</text>
        <dbReference type="Rhea" id="RHEA:10960"/>
        <dbReference type="ChEBI" id="CHEBI:16004"/>
        <dbReference type="ChEBI" id="CHEBI:16651"/>
        <dbReference type="EC" id="5.1.2.1"/>
    </reaction>
</comment>
<comment type="cofactor">
    <cofactor evidence="5">
        <name>Ni(II)-pyridinium-3,5-bisthiocarboxylate mononucleotide</name>
        <dbReference type="ChEBI" id="CHEBI:137373"/>
    </cofactor>
    <text evidence="3 5 6">Was originally shown to use Ni(2+) as a cofactor (PubMed:24710389), but in fact, the cofactor is a (SCS)Ni pincer complex, a nicotinic acid mononucleotide derivative that is covalently attached to Lys-184 and forms a tridentate pincer complex that coordinates nickel through one metal-carbon and two metal-sulfur bonds (PubMed:26138974, PubMed:27114550).</text>
</comment>
<comment type="activity regulation">
    <text evidence="3 5 6">Activation of the apo-enzyme requires the three accessory proteins LarB, LarE and LarC, that are involved in the biosynthesis of the nickel-pincer cofactor of LarA (PubMed:24710389, PubMed:27114550). Inhibited by sulfite that behaves as a mixed inhibitor (PubMed:26138974).</text>
</comment>
<comment type="biophysicochemical properties">
    <kinetics>
        <KM evidence="3">46 mM for L-lactate</KM>
        <KM evidence="3">11 mM for D-lactate</KM>
        <text evidence="3">kcat is 4745 sec(-1) for conversion of L-lactate to D-lactate. kcat is 1333 sec(-1) for conversion of D-lactate to L-lactate.</text>
    </kinetics>
</comment>
<comment type="subunit">
    <text evidence="1">Homodimer.</text>
</comment>
<comment type="induction">
    <text evidence="2 3 4">Induced by L-lactate and repressed by D-lactate. The lactate racemase activity is thus regulated by the L-lactate/D-lactate ratio, under the control of the transcriptional regulator LarR. Makes part of the lar operon (larABCDE).</text>
</comment>
<comment type="disruption phenotype">
    <text evidence="3">Deletion of this gene leads to a loss of lactate racemase activity.</text>
</comment>
<comment type="similarity">
    <text evidence="9">Belongs to the lactate racemase family.</text>
</comment>
<gene>
    <name evidence="7 11" type="primary">larA</name>
    <name evidence="11" type="ordered locus">lp_0104</name>
</gene>
<keyword id="KW-0002">3D-structure</keyword>
<keyword id="KW-0413">Isomerase</keyword>
<keyword id="KW-0479">Metal-binding</keyword>
<keyword id="KW-0533">Nickel</keyword>
<keyword id="KW-1185">Reference proteome</keyword>
<organism>
    <name type="scientific">Lactiplantibacillus plantarum (strain ATCC BAA-793 / NCIMB 8826 / WCFS1)</name>
    <name type="common">Lactobacillus plantarum</name>
    <dbReference type="NCBI Taxonomy" id="220668"/>
    <lineage>
        <taxon>Bacteria</taxon>
        <taxon>Bacillati</taxon>
        <taxon>Bacillota</taxon>
        <taxon>Bacilli</taxon>
        <taxon>Lactobacillales</taxon>
        <taxon>Lactobacillaceae</taxon>
        <taxon>Lactiplantibacillus</taxon>
    </lineage>
</organism>
<accession>F9USS9</accession>